<name>MRAY_LACLS</name>
<accession>Q02ZY6</accession>
<reference key="1">
    <citation type="journal article" date="2006" name="Proc. Natl. Acad. Sci. U.S.A.">
        <title>Comparative genomics of the lactic acid bacteria.</title>
        <authorList>
            <person name="Makarova K.S."/>
            <person name="Slesarev A."/>
            <person name="Wolf Y.I."/>
            <person name="Sorokin A."/>
            <person name="Mirkin B."/>
            <person name="Koonin E.V."/>
            <person name="Pavlov A."/>
            <person name="Pavlova N."/>
            <person name="Karamychev V."/>
            <person name="Polouchine N."/>
            <person name="Shakhova V."/>
            <person name="Grigoriev I."/>
            <person name="Lou Y."/>
            <person name="Rohksar D."/>
            <person name="Lucas S."/>
            <person name="Huang K."/>
            <person name="Goodstein D.M."/>
            <person name="Hawkins T."/>
            <person name="Plengvidhya V."/>
            <person name="Welker D."/>
            <person name="Hughes J."/>
            <person name="Goh Y."/>
            <person name="Benson A."/>
            <person name="Baldwin K."/>
            <person name="Lee J.-H."/>
            <person name="Diaz-Muniz I."/>
            <person name="Dosti B."/>
            <person name="Smeianov V."/>
            <person name="Wechter W."/>
            <person name="Barabote R."/>
            <person name="Lorca G."/>
            <person name="Altermann E."/>
            <person name="Barrangou R."/>
            <person name="Ganesan B."/>
            <person name="Xie Y."/>
            <person name="Rawsthorne H."/>
            <person name="Tamir D."/>
            <person name="Parker C."/>
            <person name="Breidt F."/>
            <person name="Broadbent J.R."/>
            <person name="Hutkins R."/>
            <person name="O'Sullivan D."/>
            <person name="Steele J."/>
            <person name="Unlu G."/>
            <person name="Saier M.H. Jr."/>
            <person name="Klaenhammer T."/>
            <person name="Richardson P."/>
            <person name="Kozyavkin S."/>
            <person name="Weimer B.C."/>
            <person name="Mills D.A."/>
        </authorList>
    </citation>
    <scope>NUCLEOTIDE SEQUENCE [LARGE SCALE GENOMIC DNA]</scope>
    <source>
        <strain>SK11</strain>
    </source>
</reference>
<organism>
    <name type="scientific">Lactococcus lactis subsp. cremoris (strain SK11)</name>
    <dbReference type="NCBI Taxonomy" id="272622"/>
    <lineage>
        <taxon>Bacteria</taxon>
        <taxon>Bacillati</taxon>
        <taxon>Bacillota</taxon>
        <taxon>Bacilli</taxon>
        <taxon>Lactobacillales</taxon>
        <taxon>Streptococcaceae</taxon>
        <taxon>Lactococcus</taxon>
        <taxon>Lactococcus cremoris subsp. cremoris</taxon>
    </lineage>
</organism>
<comment type="function">
    <text evidence="1">Catalyzes the initial step of the lipid cycle reactions in the biosynthesis of the cell wall peptidoglycan: transfers peptidoglycan precursor phospho-MurNAc-pentapeptide from UDP-MurNAc-pentapeptide onto the lipid carrier undecaprenyl phosphate, yielding undecaprenyl-pyrophosphoryl-MurNAc-pentapeptide, known as lipid I.</text>
</comment>
<comment type="catalytic activity">
    <reaction evidence="1">
        <text>UDP-N-acetyl-alpha-D-muramoyl-L-alanyl-gamma-D-glutamyl-L-lysyl-D-alanyl-D-alanine + di-trans,octa-cis-undecaprenyl phosphate = Mur2Ac(oyl-L-Ala-gamma-D-Glu-L-Lys-D-Ala-D-Ala)-di-trans,octa-cis-undecaprenyl diphosphate + UMP</text>
        <dbReference type="Rhea" id="RHEA:21920"/>
        <dbReference type="ChEBI" id="CHEBI:57865"/>
        <dbReference type="ChEBI" id="CHEBI:60032"/>
        <dbReference type="ChEBI" id="CHEBI:60392"/>
        <dbReference type="ChEBI" id="CHEBI:70758"/>
        <dbReference type="EC" id="2.7.8.13"/>
    </reaction>
</comment>
<comment type="cofactor">
    <cofactor evidence="1">
        <name>Mg(2+)</name>
        <dbReference type="ChEBI" id="CHEBI:18420"/>
    </cofactor>
</comment>
<comment type="pathway">
    <text evidence="1">Cell wall biogenesis; peptidoglycan biosynthesis.</text>
</comment>
<comment type="subcellular location">
    <subcellularLocation>
        <location evidence="1">Cell membrane</location>
        <topology evidence="1">Multi-pass membrane protein</topology>
    </subcellularLocation>
</comment>
<comment type="similarity">
    <text evidence="1">Belongs to the glycosyltransferase 4 family. MraY subfamily.</text>
</comment>
<sequence length="329" mass="36250">MLLNGIVAAVITMIITIIGIPRFIMFFHKKKLGGQPTLEDVKQHASKAGTPTMGGFVFVVVSLVVSLVAALVFGKFSPAFITAWWVFAMYAVIGFLDDFLKVFKQINEGLTAKQKMLAQILIGIVSYFIYSHGEKSHIIHILSWQVNIGIFFSIFIIIWLVGWSNAVNLTDGIDGLASITVAISLTAYAVIAVVHQQYDVLLIILSVIGGLLGFFVFNHKPAKIFMGDVGSLALGGFLAIVSILLHAEWTLLLIGAVYVIETLSVMLQVAYFKKTGGKRIFRMTPIHHHFELGGFSGKAVGWSEWKIDIVFWLFTAVLSVIALCIYFAF</sequence>
<proteinExistence type="inferred from homology"/>
<feature type="chain" id="PRO_1000002998" description="Phospho-N-acetylmuramoyl-pentapeptide-transferase">
    <location>
        <begin position="1"/>
        <end position="329"/>
    </location>
</feature>
<feature type="transmembrane region" description="Helical" evidence="1">
    <location>
        <begin position="1"/>
        <end position="21"/>
    </location>
</feature>
<feature type="transmembrane region" description="Helical" evidence="1">
    <location>
        <begin position="53"/>
        <end position="73"/>
    </location>
</feature>
<feature type="transmembrane region" description="Helical" evidence="1">
    <location>
        <begin position="76"/>
        <end position="96"/>
    </location>
</feature>
<feature type="transmembrane region" description="Helical" evidence="1">
    <location>
        <begin position="109"/>
        <end position="129"/>
    </location>
</feature>
<feature type="transmembrane region" description="Helical" evidence="1">
    <location>
        <begin position="141"/>
        <end position="161"/>
    </location>
</feature>
<feature type="transmembrane region" description="Helical" evidence="1">
    <location>
        <begin position="175"/>
        <end position="195"/>
    </location>
</feature>
<feature type="transmembrane region" description="Helical" evidence="1">
    <location>
        <begin position="198"/>
        <end position="218"/>
    </location>
</feature>
<feature type="transmembrane region" description="Helical" evidence="1">
    <location>
        <begin position="237"/>
        <end position="257"/>
    </location>
</feature>
<feature type="transmembrane region" description="Helical" evidence="1">
    <location>
        <begin position="309"/>
        <end position="329"/>
    </location>
</feature>
<protein>
    <recommendedName>
        <fullName evidence="1">Phospho-N-acetylmuramoyl-pentapeptide-transferase</fullName>
        <ecNumber evidence="1">2.7.8.13</ecNumber>
    </recommendedName>
    <alternativeName>
        <fullName evidence="1">UDP-MurNAc-pentapeptide phosphotransferase</fullName>
    </alternativeName>
</protein>
<keyword id="KW-0131">Cell cycle</keyword>
<keyword id="KW-0132">Cell division</keyword>
<keyword id="KW-1003">Cell membrane</keyword>
<keyword id="KW-0133">Cell shape</keyword>
<keyword id="KW-0961">Cell wall biogenesis/degradation</keyword>
<keyword id="KW-0460">Magnesium</keyword>
<keyword id="KW-0472">Membrane</keyword>
<keyword id="KW-0479">Metal-binding</keyword>
<keyword id="KW-0573">Peptidoglycan synthesis</keyword>
<keyword id="KW-0808">Transferase</keyword>
<keyword id="KW-0812">Transmembrane</keyword>
<keyword id="KW-1133">Transmembrane helix</keyword>
<evidence type="ECO:0000255" key="1">
    <source>
        <dbReference type="HAMAP-Rule" id="MF_00038"/>
    </source>
</evidence>
<gene>
    <name evidence="1" type="primary">mraY</name>
    <name type="ordered locus">LACR_0938</name>
</gene>
<dbReference type="EC" id="2.7.8.13" evidence="1"/>
<dbReference type="EMBL" id="CP000425">
    <property type="protein sequence ID" value="ABJ72486.1"/>
    <property type="molecule type" value="Genomic_DNA"/>
</dbReference>
<dbReference type="RefSeq" id="WP_011675832.1">
    <property type="nucleotide sequence ID" value="NC_008527.1"/>
</dbReference>
<dbReference type="SMR" id="Q02ZY6"/>
<dbReference type="KEGG" id="llc:LACR_0938"/>
<dbReference type="HOGENOM" id="CLU_023982_0_1_9"/>
<dbReference type="UniPathway" id="UPA00219"/>
<dbReference type="Proteomes" id="UP000000240">
    <property type="component" value="Chromosome"/>
</dbReference>
<dbReference type="GO" id="GO:0005886">
    <property type="term" value="C:plasma membrane"/>
    <property type="evidence" value="ECO:0007669"/>
    <property type="project" value="UniProtKB-SubCell"/>
</dbReference>
<dbReference type="GO" id="GO:0046872">
    <property type="term" value="F:metal ion binding"/>
    <property type="evidence" value="ECO:0007669"/>
    <property type="project" value="UniProtKB-KW"/>
</dbReference>
<dbReference type="GO" id="GO:0008963">
    <property type="term" value="F:phospho-N-acetylmuramoyl-pentapeptide-transferase activity"/>
    <property type="evidence" value="ECO:0007669"/>
    <property type="project" value="UniProtKB-UniRule"/>
</dbReference>
<dbReference type="GO" id="GO:0051301">
    <property type="term" value="P:cell division"/>
    <property type="evidence" value="ECO:0007669"/>
    <property type="project" value="UniProtKB-KW"/>
</dbReference>
<dbReference type="GO" id="GO:0071555">
    <property type="term" value="P:cell wall organization"/>
    <property type="evidence" value="ECO:0007669"/>
    <property type="project" value="UniProtKB-KW"/>
</dbReference>
<dbReference type="GO" id="GO:0009252">
    <property type="term" value="P:peptidoglycan biosynthetic process"/>
    <property type="evidence" value="ECO:0007669"/>
    <property type="project" value="UniProtKB-UniRule"/>
</dbReference>
<dbReference type="GO" id="GO:0008360">
    <property type="term" value="P:regulation of cell shape"/>
    <property type="evidence" value="ECO:0007669"/>
    <property type="project" value="UniProtKB-KW"/>
</dbReference>
<dbReference type="CDD" id="cd06852">
    <property type="entry name" value="GT_MraY"/>
    <property type="match status" value="1"/>
</dbReference>
<dbReference type="HAMAP" id="MF_00038">
    <property type="entry name" value="MraY"/>
    <property type="match status" value="1"/>
</dbReference>
<dbReference type="InterPro" id="IPR000715">
    <property type="entry name" value="Glycosyl_transferase_4"/>
</dbReference>
<dbReference type="InterPro" id="IPR003524">
    <property type="entry name" value="PNAcMuramoyl-5peptid_Trfase"/>
</dbReference>
<dbReference type="InterPro" id="IPR018480">
    <property type="entry name" value="PNAcMuramoyl-5peptid_Trfase_CS"/>
</dbReference>
<dbReference type="NCBIfam" id="TIGR00445">
    <property type="entry name" value="mraY"/>
    <property type="match status" value="1"/>
</dbReference>
<dbReference type="PANTHER" id="PTHR22926">
    <property type="entry name" value="PHOSPHO-N-ACETYLMURAMOYL-PENTAPEPTIDE-TRANSFERASE"/>
    <property type="match status" value="1"/>
</dbReference>
<dbReference type="PANTHER" id="PTHR22926:SF5">
    <property type="entry name" value="PHOSPHO-N-ACETYLMURAMOYL-PENTAPEPTIDE-TRANSFERASE HOMOLOG"/>
    <property type="match status" value="1"/>
</dbReference>
<dbReference type="Pfam" id="PF00953">
    <property type="entry name" value="Glycos_transf_4"/>
    <property type="match status" value="1"/>
</dbReference>
<dbReference type="Pfam" id="PF10555">
    <property type="entry name" value="MraY_sig1"/>
    <property type="match status" value="1"/>
</dbReference>
<dbReference type="PROSITE" id="PS01348">
    <property type="entry name" value="MRAY_2"/>
    <property type="match status" value="1"/>
</dbReference>